<name>AZRB_BACOY</name>
<comment type="function">
    <text>Catalyzes the reductive cleavage of azo bond in aromatic azo compounds to the corresponding amines. Requires NADPH as an electron donor for its activity. Compounds with paired naphthalene groups coupled with the azo group are good substrates, with the following preference order: Rocceline &gt; Sumifix Black B &gt; Solar Orange.</text>
</comment>
<comment type="catalytic activity">
    <reaction>
        <text>N,N-dimethyl-1,4-phenylenediamine + aniline + 2 NADP(+) = 4-(dimethylamino)azobenzene + 2 NADPH + 2 H(+)</text>
        <dbReference type="Rhea" id="RHEA:16269"/>
        <dbReference type="ChEBI" id="CHEBI:15378"/>
        <dbReference type="ChEBI" id="CHEBI:15783"/>
        <dbReference type="ChEBI" id="CHEBI:17296"/>
        <dbReference type="ChEBI" id="CHEBI:17903"/>
        <dbReference type="ChEBI" id="CHEBI:57783"/>
        <dbReference type="ChEBI" id="CHEBI:58349"/>
        <dbReference type="EC" id="1.7.1.6"/>
    </reaction>
</comment>
<comment type="biophysicochemical properties">
    <temperatureDependence>
        <text>Optimum temperature is 70 degrees Celsius.</text>
    </temperatureDependence>
</comment>
<comment type="subunit">
    <text>Monomer.</text>
</comment>
<comment type="induction">
    <text>Constitutively expressed.</text>
</comment>
<comment type="similarity">
    <text evidence="2">Belongs to the azoreductase type 2 family.</text>
</comment>
<reference key="1">
    <citation type="journal article" date="2001" name="J. Biol. Chem.">
        <title>Molecular cloning and characterization of the gene coding for azoreductase from Bacillus sp. OY1-2 isolated from soil.</title>
        <authorList>
            <person name="Suzuki Y."/>
            <person name="Yoda T."/>
            <person name="Ruhul A."/>
            <person name="Sugiura W."/>
        </authorList>
    </citation>
    <scope>NUCLEOTIDE SEQUENCE [GENOMIC DNA]</scope>
    <scope>PROTEIN SEQUENCE OF 1-31</scope>
    <scope>CHARACTERIZATION</scope>
</reference>
<keyword id="KW-0903">Direct protein sequencing</keyword>
<keyword id="KW-0521">NADP</keyword>
<keyword id="KW-0560">Oxidoreductase</keyword>
<organism>
    <name type="scientific">Bacillus sp. (strain OY1-2)</name>
    <dbReference type="NCBI Taxonomy" id="104667"/>
    <lineage>
        <taxon>Bacteria</taxon>
        <taxon>Bacillati</taxon>
        <taxon>Bacillota</taxon>
        <taxon>Bacilli</taxon>
        <taxon>Bacillales</taxon>
        <taxon>Bacillaceae</taxon>
        <taxon>Bacillus</taxon>
    </lineage>
</organism>
<evidence type="ECO:0000255" key="1"/>
<evidence type="ECO:0000305" key="2"/>
<feature type="chain" id="PRO_0000234085" description="NADPH azoreductase">
    <location>
        <begin position="1"/>
        <end position="178"/>
    </location>
</feature>
<feature type="binding site" evidence="1">
    <location>
        <begin position="106"/>
        <end position="111"/>
    </location>
    <ligand>
        <name>NADP(+)</name>
        <dbReference type="ChEBI" id="CHEBI:58349"/>
    </ligand>
</feature>
<dbReference type="EC" id="1.7.1.6"/>
<dbReference type="EMBL" id="AB032601">
    <property type="protein sequence ID" value="BAB13746.1"/>
    <property type="molecule type" value="Genomic_DNA"/>
</dbReference>
<dbReference type="SMR" id="Q9FAW5"/>
<dbReference type="DrugBank" id="DB01014">
    <property type="generic name" value="Balsalazide"/>
</dbReference>
<dbReference type="KEGG" id="ag:BAB13746"/>
<dbReference type="BRENDA" id="1.7.1.6">
    <property type="organism ID" value="691"/>
</dbReference>
<dbReference type="SABIO-RK" id="Q9FAW5"/>
<dbReference type="GO" id="GO:0005829">
    <property type="term" value="C:cytosol"/>
    <property type="evidence" value="ECO:0007669"/>
    <property type="project" value="TreeGrafter"/>
</dbReference>
<dbReference type="GO" id="GO:0050446">
    <property type="term" value="F:azobenzene reductase activity"/>
    <property type="evidence" value="ECO:0007669"/>
    <property type="project" value="UniProtKB-EC"/>
</dbReference>
<dbReference type="GO" id="GO:0010181">
    <property type="term" value="F:FMN binding"/>
    <property type="evidence" value="ECO:0007669"/>
    <property type="project" value="TreeGrafter"/>
</dbReference>
<dbReference type="FunFam" id="3.40.50.360:FF:000022">
    <property type="entry name" value="NADPH azoreductase"/>
    <property type="match status" value="1"/>
</dbReference>
<dbReference type="Gene3D" id="3.40.50.360">
    <property type="match status" value="1"/>
</dbReference>
<dbReference type="InterPro" id="IPR029039">
    <property type="entry name" value="Flavoprotein-like_sf"/>
</dbReference>
<dbReference type="InterPro" id="IPR005025">
    <property type="entry name" value="FMN_Rdtase-like_dom"/>
</dbReference>
<dbReference type="InterPro" id="IPR050712">
    <property type="entry name" value="NAD(P)H-dep_reductase"/>
</dbReference>
<dbReference type="PANTHER" id="PTHR30543">
    <property type="entry name" value="CHROMATE REDUCTASE"/>
    <property type="match status" value="1"/>
</dbReference>
<dbReference type="PANTHER" id="PTHR30543:SF21">
    <property type="entry name" value="NAD(P)H-DEPENDENT FMN REDUCTASE LOT6"/>
    <property type="match status" value="1"/>
</dbReference>
<dbReference type="Pfam" id="PF03358">
    <property type="entry name" value="FMN_red"/>
    <property type="match status" value="1"/>
</dbReference>
<dbReference type="SUPFAM" id="SSF52218">
    <property type="entry name" value="Flavoproteins"/>
    <property type="match status" value="1"/>
</dbReference>
<sequence length="178" mass="19293">MKLVVINGTPRKFGRTRVVAKYIADQFEGELYDLAIEELPLYNGEESQRDLEAVKKLKTLVKAADGVVLCTPEYHNAMSGALKNSLDYLSSSEFIHKPVALLAVAGGGKGGINALNSMHASLAGVYANAIPKQVVLDGLHVQDGELGEDAKPLIHDVVKELKAYMSVYKEVKKQLGVE</sequence>
<gene>
    <name type="primary">azr</name>
</gene>
<proteinExistence type="evidence at protein level"/>
<accession>Q9FAW5</accession>
<protein>
    <recommendedName>
        <fullName>NADPH azoreductase</fullName>
        <ecNumber>1.7.1.6</ecNumber>
    </recommendedName>
</protein>